<evidence type="ECO:0000255" key="1">
    <source>
        <dbReference type="HAMAP-Rule" id="MF_01401"/>
    </source>
</evidence>
<reference key="1">
    <citation type="journal article" date="2007" name="J. Bacteriol.">
        <title>Genome sequence analysis of the emerging human pathogenic acetic acid bacterium Granulibacter bethesdensis.</title>
        <authorList>
            <person name="Greenberg D.E."/>
            <person name="Porcella S.F."/>
            <person name="Zelazny A.M."/>
            <person name="Virtaneva K."/>
            <person name="Sturdevant D.E."/>
            <person name="Kupko J.J. III"/>
            <person name="Barbian K.D."/>
            <person name="Babar A."/>
            <person name="Dorward D.W."/>
            <person name="Holland S.M."/>
        </authorList>
    </citation>
    <scope>NUCLEOTIDE SEQUENCE [LARGE SCALE GENOMIC DNA]</scope>
    <source>
        <strain>ATCC BAA-1260 / CGDNIH1</strain>
    </source>
</reference>
<organism>
    <name type="scientific">Granulibacter bethesdensis (strain ATCC BAA-1260 / CGDNIH1)</name>
    <dbReference type="NCBI Taxonomy" id="391165"/>
    <lineage>
        <taxon>Bacteria</taxon>
        <taxon>Pseudomonadati</taxon>
        <taxon>Pseudomonadota</taxon>
        <taxon>Alphaproteobacteria</taxon>
        <taxon>Acetobacterales</taxon>
        <taxon>Acetobacteraceae</taxon>
        <taxon>Granulibacter</taxon>
    </lineage>
</organism>
<comment type="function">
    <text evidence="1">Has an important function as a repair enzyme for proteins that have been inactivated by oxidation. Catalyzes the reversible oxidation-reduction of methionine sulfoxide in proteins to methionine.</text>
</comment>
<comment type="catalytic activity">
    <reaction evidence="1">
        <text>L-methionyl-[protein] + [thioredoxin]-disulfide + H2O = L-methionyl-(S)-S-oxide-[protein] + [thioredoxin]-dithiol</text>
        <dbReference type="Rhea" id="RHEA:14217"/>
        <dbReference type="Rhea" id="RHEA-COMP:10698"/>
        <dbReference type="Rhea" id="RHEA-COMP:10700"/>
        <dbReference type="Rhea" id="RHEA-COMP:12313"/>
        <dbReference type="Rhea" id="RHEA-COMP:12315"/>
        <dbReference type="ChEBI" id="CHEBI:15377"/>
        <dbReference type="ChEBI" id="CHEBI:16044"/>
        <dbReference type="ChEBI" id="CHEBI:29950"/>
        <dbReference type="ChEBI" id="CHEBI:44120"/>
        <dbReference type="ChEBI" id="CHEBI:50058"/>
        <dbReference type="EC" id="1.8.4.11"/>
    </reaction>
</comment>
<comment type="catalytic activity">
    <reaction evidence="1">
        <text>[thioredoxin]-disulfide + L-methionine + H2O = L-methionine (S)-S-oxide + [thioredoxin]-dithiol</text>
        <dbReference type="Rhea" id="RHEA:19993"/>
        <dbReference type="Rhea" id="RHEA-COMP:10698"/>
        <dbReference type="Rhea" id="RHEA-COMP:10700"/>
        <dbReference type="ChEBI" id="CHEBI:15377"/>
        <dbReference type="ChEBI" id="CHEBI:29950"/>
        <dbReference type="ChEBI" id="CHEBI:50058"/>
        <dbReference type="ChEBI" id="CHEBI:57844"/>
        <dbReference type="ChEBI" id="CHEBI:58772"/>
        <dbReference type="EC" id="1.8.4.11"/>
    </reaction>
</comment>
<comment type="similarity">
    <text evidence="1">Belongs to the MsrA Met sulfoxide reductase family.</text>
</comment>
<sequence length="185" mass="20303">MWMETAVIGGGCFWCVEAVLRELNGVASIRPGYAGGHTANPTYKEVCTGTTFHAEVVEVTFDPAILSYVDLLRIFLTIHDPTTPNRQGADVGTQYRSVIMPASTEQENAARGVLAEVEAAQIWQAPLSTTIEPLQIFYPAEPEHVDYFARHPEAAYCQAVIAPKVRAFRKHAADHVRANISPNHA</sequence>
<name>MSRA_GRABC</name>
<protein>
    <recommendedName>
        <fullName evidence="1">Peptide methionine sulfoxide reductase MsrA</fullName>
        <shortName evidence="1">Protein-methionine-S-oxide reductase</shortName>
        <ecNumber evidence="1">1.8.4.11</ecNumber>
    </recommendedName>
    <alternativeName>
        <fullName evidence="1">Peptide-methionine (S)-S-oxide reductase</fullName>
        <shortName evidence="1">Peptide Met(O) reductase</shortName>
    </alternativeName>
</protein>
<dbReference type="EC" id="1.8.4.11" evidence="1"/>
<dbReference type="EMBL" id="CP000394">
    <property type="protein sequence ID" value="ABI63317.1"/>
    <property type="molecule type" value="Genomic_DNA"/>
</dbReference>
<dbReference type="SMR" id="Q0BPD5"/>
<dbReference type="STRING" id="391165.GbCGDNIH1_2419"/>
<dbReference type="KEGG" id="gbe:GbCGDNIH1_2419"/>
<dbReference type="eggNOG" id="COG0225">
    <property type="taxonomic scope" value="Bacteria"/>
</dbReference>
<dbReference type="HOGENOM" id="CLU_031040_10_0_5"/>
<dbReference type="Proteomes" id="UP000001963">
    <property type="component" value="Chromosome"/>
</dbReference>
<dbReference type="GO" id="GO:0033744">
    <property type="term" value="F:L-methionine:thioredoxin-disulfide S-oxidoreductase activity"/>
    <property type="evidence" value="ECO:0007669"/>
    <property type="project" value="RHEA"/>
</dbReference>
<dbReference type="GO" id="GO:0008113">
    <property type="term" value="F:peptide-methionine (S)-S-oxide reductase activity"/>
    <property type="evidence" value="ECO:0007669"/>
    <property type="project" value="UniProtKB-UniRule"/>
</dbReference>
<dbReference type="GO" id="GO:0036211">
    <property type="term" value="P:protein modification process"/>
    <property type="evidence" value="ECO:0007669"/>
    <property type="project" value="UniProtKB-UniRule"/>
</dbReference>
<dbReference type="Gene3D" id="3.30.1060.10">
    <property type="entry name" value="Peptide methionine sulphoxide reductase MsrA"/>
    <property type="match status" value="1"/>
</dbReference>
<dbReference type="HAMAP" id="MF_01401">
    <property type="entry name" value="MsrA"/>
    <property type="match status" value="1"/>
</dbReference>
<dbReference type="InterPro" id="IPR002569">
    <property type="entry name" value="Met_Sox_Rdtase_MsrA_dom"/>
</dbReference>
<dbReference type="InterPro" id="IPR036509">
    <property type="entry name" value="Met_Sox_Rdtase_MsrA_sf"/>
</dbReference>
<dbReference type="NCBIfam" id="TIGR00401">
    <property type="entry name" value="msrA"/>
    <property type="match status" value="1"/>
</dbReference>
<dbReference type="PANTHER" id="PTHR43774">
    <property type="entry name" value="PEPTIDE METHIONINE SULFOXIDE REDUCTASE"/>
    <property type="match status" value="1"/>
</dbReference>
<dbReference type="PANTHER" id="PTHR43774:SF1">
    <property type="entry name" value="PEPTIDE METHIONINE SULFOXIDE REDUCTASE MSRA 2"/>
    <property type="match status" value="1"/>
</dbReference>
<dbReference type="Pfam" id="PF01625">
    <property type="entry name" value="PMSR"/>
    <property type="match status" value="1"/>
</dbReference>
<dbReference type="SUPFAM" id="SSF55068">
    <property type="entry name" value="Peptide methionine sulfoxide reductase"/>
    <property type="match status" value="1"/>
</dbReference>
<keyword id="KW-0560">Oxidoreductase</keyword>
<keyword id="KW-1185">Reference proteome</keyword>
<accession>Q0BPD5</accession>
<proteinExistence type="inferred from homology"/>
<feature type="chain" id="PRO_1000068329" description="Peptide methionine sulfoxide reductase MsrA">
    <location>
        <begin position="1"/>
        <end position="185"/>
    </location>
</feature>
<feature type="active site" evidence="1">
    <location>
        <position position="12"/>
    </location>
</feature>
<gene>
    <name evidence="1" type="primary">msrA</name>
    <name type="ordered locus">GbCGDNIH1_2419</name>
</gene>